<reference key="1">
    <citation type="journal article" date="2000" name="Science">
        <title>The genome sequence of Drosophila melanogaster.</title>
        <authorList>
            <person name="Adams M.D."/>
            <person name="Celniker S.E."/>
            <person name="Holt R.A."/>
            <person name="Evans C.A."/>
            <person name="Gocayne J.D."/>
            <person name="Amanatides P.G."/>
            <person name="Scherer S.E."/>
            <person name="Li P.W."/>
            <person name="Hoskins R.A."/>
            <person name="Galle R.F."/>
            <person name="George R.A."/>
            <person name="Lewis S.E."/>
            <person name="Richards S."/>
            <person name="Ashburner M."/>
            <person name="Henderson S.N."/>
            <person name="Sutton G.G."/>
            <person name="Wortman J.R."/>
            <person name="Yandell M.D."/>
            <person name="Zhang Q."/>
            <person name="Chen L.X."/>
            <person name="Brandon R.C."/>
            <person name="Rogers Y.-H.C."/>
            <person name="Blazej R.G."/>
            <person name="Champe M."/>
            <person name="Pfeiffer B.D."/>
            <person name="Wan K.H."/>
            <person name="Doyle C."/>
            <person name="Baxter E.G."/>
            <person name="Helt G."/>
            <person name="Nelson C.R."/>
            <person name="Miklos G.L.G."/>
            <person name="Abril J.F."/>
            <person name="Agbayani A."/>
            <person name="An H.-J."/>
            <person name="Andrews-Pfannkoch C."/>
            <person name="Baldwin D."/>
            <person name="Ballew R.M."/>
            <person name="Basu A."/>
            <person name="Baxendale J."/>
            <person name="Bayraktaroglu L."/>
            <person name="Beasley E.M."/>
            <person name="Beeson K.Y."/>
            <person name="Benos P.V."/>
            <person name="Berman B.P."/>
            <person name="Bhandari D."/>
            <person name="Bolshakov S."/>
            <person name="Borkova D."/>
            <person name="Botchan M.R."/>
            <person name="Bouck J."/>
            <person name="Brokstein P."/>
            <person name="Brottier P."/>
            <person name="Burtis K.C."/>
            <person name="Busam D.A."/>
            <person name="Butler H."/>
            <person name="Cadieu E."/>
            <person name="Center A."/>
            <person name="Chandra I."/>
            <person name="Cherry J.M."/>
            <person name="Cawley S."/>
            <person name="Dahlke C."/>
            <person name="Davenport L.B."/>
            <person name="Davies P."/>
            <person name="de Pablos B."/>
            <person name="Delcher A."/>
            <person name="Deng Z."/>
            <person name="Mays A.D."/>
            <person name="Dew I."/>
            <person name="Dietz S.M."/>
            <person name="Dodson K."/>
            <person name="Doup L.E."/>
            <person name="Downes M."/>
            <person name="Dugan-Rocha S."/>
            <person name="Dunkov B.C."/>
            <person name="Dunn P."/>
            <person name="Durbin K.J."/>
            <person name="Evangelista C.C."/>
            <person name="Ferraz C."/>
            <person name="Ferriera S."/>
            <person name="Fleischmann W."/>
            <person name="Fosler C."/>
            <person name="Gabrielian A.E."/>
            <person name="Garg N.S."/>
            <person name="Gelbart W.M."/>
            <person name="Glasser K."/>
            <person name="Glodek A."/>
            <person name="Gong F."/>
            <person name="Gorrell J.H."/>
            <person name="Gu Z."/>
            <person name="Guan P."/>
            <person name="Harris M."/>
            <person name="Harris N.L."/>
            <person name="Harvey D.A."/>
            <person name="Heiman T.J."/>
            <person name="Hernandez J.R."/>
            <person name="Houck J."/>
            <person name="Hostin D."/>
            <person name="Houston K.A."/>
            <person name="Howland T.J."/>
            <person name="Wei M.-H."/>
            <person name="Ibegwam C."/>
            <person name="Jalali M."/>
            <person name="Kalush F."/>
            <person name="Karpen G.H."/>
            <person name="Ke Z."/>
            <person name="Kennison J.A."/>
            <person name="Ketchum K.A."/>
            <person name="Kimmel B.E."/>
            <person name="Kodira C.D."/>
            <person name="Kraft C.L."/>
            <person name="Kravitz S."/>
            <person name="Kulp D."/>
            <person name="Lai Z."/>
            <person name="Lasko P."/>
            <person name="Lei Y."/>
            <person name="Levitsky A.A."/>
            <person name="Li J.H."/>
            <person name="Li Z."/>
            <person name="Liang Y."/>
            <person name="Lin X."/>
            <person name="Liu X."/>
            <person name="Mattei B."/>
            <person name="McIntosh T.C."/>
            <person name="McLeod M.P."/>
            <person name="McPherson D."/>
            <person name="Merkulov G."/>
            <person name="Milshina N.V."/>
            <person name="Mobarry C."/>
            <person name="Morris J."/>
            <person name="Moshrefi A."/>
            <person name="Mount S.M."/>
            <person name="Moy M."/>
            <person name="Murphy B."/>
            <person name="Murphy L."/>
            <person name="Muzny D.M."/>
            <person name="Nelson D.L."/>
            <person name="Nelson D.R."/>
            <person name="Nelson K.A."/>
            <person name="Nixon K."/>
            <person name="Nusskern D.R."/>
            <person name="Pacleb J.M."/>
            <person name="Palazzolo M."/>
            <person name="Pittman G.S."/>
            <person name="Pan S."/>
            <person name="Pollard J."/>
            <person name="Puri V."/>
            <person name="Reese M.G."/>
            <person name="Reinert K."/>
            <person name="Remington K."/>
            <person name="Saunders R.D.C."/>
            <person name="Scheeler F."/>
            <person name="Shen H."/>
            <person name="Shue B.C."/>
            <person name="Siden-Kiamos I."/>
            <person name="Simpson M."/>
            <person name="Skupski M.P."/>
            <person name="Smith T.J."/>
            <person name="Spier E."/>
            <person name="Spradling A.C."/>
            <person name="Stapleton M."/>
            <person name="Strong R."/>
            <person name="Sun E."/>
            <person name="Svirskas R."/>
            <person name="Tector C."/>
            <person name="Turner R."/>
            <person name="Venter E."/>
            <person name="Wang A.H."/>
            <person name="Wang X."/>
            <person name="Wang Z.-Y."/>
            <person name="Wassarman D.A."/>
            <person name="Weinstock G.M."/>
            <person name="Weissenbach J."/>
            <person name="Williams S.M."/>
            <person name="Woodage T."/>
            <person name="Worley K.C."/>
            <person name="Wu D."/>
            <person name="Yang S."/>
            <person name="Yao Q.A."/>
            <person name="Ye J."/>
            <person name="Yeh R.-F."/>
            <person name="Zaveri J.S."/>
            <person name="Zhan M."/>
            <person name="Zhang G."/>
            <person name="Zhao Q."/>
            <person name="Zheng L."/>
            <person name="Zheng X.H."/>
            <person name="Zhong F.N."/>
            <person name="Zhong W."/>
            <person name="Zhou X."/>
            <person name="Zhu S.C."/>
            <person name="Zhu X."/>
            <person name="Smith H.O."/>
            <person name="Gibbs R.A."/>
            <person name="Myers E.W."/>
            <person name="Rubin G.M."/>
            <person name="Venter J.C."/>
        </authorList>
    </citation>
    <scope>NUCLEOTIDE SEQUENCE [LARGE SCALE GENOMIC DNA]</scope>
    <source>
        <strain>Berkeley</strain>
    </source>
</reference>
<reference key="2">
    <citation type="journal article" date="2002" name="Genome Biol.">
        <title>Annotation of the Drosophila melanogaster euchromatic genome: a systematic review.</title>
        <authorList>
            <person name="Misra S."/>
            <person name="Crosby M.A."/>
            <person name="Mungall C.J."/>
            <person name="Matthews B.B."/>
            <person name="Campbell K.S."/>
            <person name="Hradecky P."/>
            <person name="Huang Y."/>
            <person name="Kaminker J.S."/>
            <person name="Millburn G.H."/>
            <person name="Prochnik S.E."/>
            <person name="Smith C.D."/>
            <person name="Tupy J.L."/>
            <person name="Whitfield E.J."/>
            <person name="Bayraktaroglu L."/>
            <person name="Berman B.P."/>
            <person name="Bettencourt B.R."/>
            <person name="Celniker S.E."/>
            <person name="de Grey A.D.N.J."/>
            <person name="Drysdale R.A."/>
            <person name="Harris N.L."/>
            <person name="Richter J."/>
            <person name="Russo S."/>
            <person name="Schroeder A.J."/>
            <person name="Shu S.Q."/>
            <person name="Stapleton M."/>
            <person name="Yamada C."/>
            <person name="Ashburner M."/>
            <person name="Gelbart W.M."/>
            <person name="Rubin G.M."/>
            <person name="Lewis S.E."/>
        </authorList>
    </citation>
    <scope>GENOME REANNOTATION</scope>
    <source>
        <strain>Berkeley</strain>
    </source>
</reference>
<reference key="3">
    <citation type="journal article" date="2002" name="Genome Biol.">
        <title>A Drosophila full-length cDNA resource.</title>
        <authorList>
            <person name="Stapleton M."/>
            <person name="Carlson J.W."/>
            <person name="Brokstein P."/>
            <person name="Yu C."/>
            <person name="Champe M."/>
            <person name="George R.A."/>
            <person name="Guarin H."/>
            <person name="Kronmiller B."/>
            <person name="Pacleb J.M."/>
            <person name="Park S."/>
            <person name="Wan K.H."/>
            <person name="Rubin G.M."/>
            <person name="Celniker S.E."/>
        </authorList>
    </citation>
    <scope>NUCLEOTIDE SEQUENCE [LARGE SCALE MRNA]</scope>
    <source>
        <strain>Berkeley</strain>
        <tissue>Embryo</tissue>
    </source>
</reference>
<keyword id="KW-0963">Cytoplasm</keyword>
<keyword id="KW-0396">Initiation factor</keyword>
<keyword id="KW-0648">Protein biosynthesis</keyword>
<keyword id="KW-1185">Reference proteome</keyword>
<dbReference type="EMBL" id="AE014297">
    <property type="protein sequence ID" value="AAF52101.1"/>
    <property type="molecule type" value="Genomic_DNA"/>
</dbReference>
<dbReference type="EMBL" id="AY118972">
    <property type="protein sequence ID" value="AAM50832.1"/>
    <property type="molecule type" value="mRNA"/>
</dbReference>
<dbReference type="RefSeq" id="NP_649489.1">
    <property type="nucleotide sequence ID" value="NM_141232.3"/>
</dbReference>
<dbReference type="SMR" id="Q9VN50"/>
<dbReference type="BioGRID" id="65804">
    <property type="interactions" value="26"/>
</dbReference>
<dbReference type="FunCoup" id="Q9VN50">
    <property type="interactions" value="2262"/>
</dbReference>
<dbReference type="IntAct" id="Q9VN50">
    <property type="interactions" value="12"/>
</dbReference>
<dbReference type="STRING" id="7227.FBpp0078532"/>
<dbReference type="MEROPS" id="M67.974"/>
<dbReference type="PaxDb" id="7227-FBpp0078532"/>
<dbReference type="DNASU" id="40587"/>
<dbReference type="EnsemblMetazoa" id="FBtr0078892">
    <property type="protein sequence ID" value="FBpp0078532"/>
    <property type="gene ID" value="FBgn0037270"/>
</dbReference>
<dbReference type="GeneID" id="40587"/>
<dbReference type="KEGG" id="dme:Dmel_CG9769"/>
<dbReference type="UCSC" id="CG9769-RA">
    <property type="organism name" value="d. melanogaster"/>
</dbReference>
<dbReference type="AGR" id="FB:FBgn0037270"/>
<dbReference type="CTD" id="40587"/>
<dbReference type="FlyBase" id="FBgn0037270">
    <property type="gene designation" value="eIF3f1"/>
</dbReference>
<dbReference type="VEuPathDB" id="VectorBase:FBgn0037270"/>
<dbReference type="eggNOG" id="KOG2975">
    <property type="taxonomic scope" value="Eukaryota"/>
</dbReference>
<dbReference type="GeneTree" id="ENSGT00950000183073"/>
<dbReference type="HOGENOM" id="CLU_027018_0_1_1"/>
<dbReference type="InParanoid" id="Q9VN50"/>
<dbReference type="OMA" id="EYFVHFH"/>
<dbReference type="OrthoDB" id="25498at2759"/>
<dbReference type="PhylomeDB" id="Q9VN50"/>
<dbReference type="Reactome" id="R-DME-156827">
    <property type="pathway name" value="L13a-mediated translational silencing of Ceruloplasmin expression"/>
</dbReference>
<dbReference type="Reactome" id="R-DME-72649">
    <property type="pathway name" value="Translation initiation complex formation"/>
</dbReference>
<dbReference type="Reactome" id="R-DME-72689">
    <property type="pathway name" value="Formation of a pool of free 40S subunits"/>
</dbReference>
<dbReference type="Reactome" id="R-DME-72695">
    <property type="pathway name" value="Formation of the ternary complex, and subsequently, the 43S complex"/>
</dbReference>
<dbReference type="Reactome" id="R-DME-72702">
    <property type="pathway name" value="Ribosomal scanning and start codon recognition"/>
</dbReference>
<dbReference type="SignaLink" id="Q9VN50"/>
<dbReference type="BioGRID-ORCS" id="40587">
    <property type="hits" value="1 hit in 1 CRISPR screen"/>
</dbReference>
<dbReference type="ChiTaRS" id="CG9769">
    <property type="organism name" value="fly"/>
</dbReference>
<dbReference type="GenomeRNAi" id="40587"/>
<dbReference type="PRO" id="PR:Q9VN50"/>
<dbReference type="Proteomes" id="UP000000803">
    <property type="component" value="Chromosome 3R"/>
</dbReference>
<dbReference type="Bgee" id="FBgn0037270">
    <property type="expression patterns" value="Expressed in adult enteroendocrine precursor cell in adult midgut (Drosophila) and 264 other cell types or tissues"/>
</dbReference>
<dbReference type="GO" id="GO:0016282">
    <property type="term" value="C:eukaryotic 43S preinitiation complex"/>
    <property type="evidence" value="ECO:0007669"/>
    <property type="project" value="UniProtKB-UniRule"/>
</dbReference>
<dbReference type="GO" id="GO:0033290">
    <property type="term" value="C:eukaryotic 48S preinitiation complex"/>
    <property type="evidence" value="ECO:0007669"/>
    <property type="project" value="UniProtKB-UniRule"/>
</dbReference>
<dbReference type="GO" id="GO:0005852">
    <property type="term" value="C:eukaryotic translation initiation factor 3 complex"/>
    <property type="evidence" value="ECO:0000250"/>
    <property type="project" value="FlyBase"/>
</dbReference>
<dbReference type="GO" id="GO:0071541">
    <property type="term" value="C:eukaryotic translation initiation factor 3 complex, eIF3m"/>
    <property type="evidence" value="ECO:0000318"/>
    <property type="project" value="GO_Central"/>
</dbReference>
<dbReference type="GO" id="GO:0140492">
    <property type="term" value="F:metal-dependent deubiquitinase activity"/>
    <property type="evidence" value="ECO:0000314"/>
    <property type="project" value="FlyBase"/>
</dbReference>
<dbReference type="GO" id="GO:0003743">
    <property type="term" value="F:translation initiation factor activity"/>
    <property type="evidence" value="ECO:0007669"/>
    <property type="project" value="UniProtKB-UniRule"/>
</dbReference>
<dbReference type="GO" id="GO:0031369">
    <property type="term" value="F:translation initiation factor binding"/>
    <property type="evidence" value="ECO:0000318"/>
    <property type="project" value="GO_Central"/>
</dbReference>
<dbReference type="GO" id="GO:0140367">
    <property type="term" value="P:antibacterial innate immune response"/>
    <property type="evidence" value="ECO:0000315"/>
    <property type="project" value="FlyBase"/>
</dbReference>
<dbReference type="GO" id="GO:0050829">
    <property type="term" value="P:defense response to Gram-negative bacterium"/>
    <property type="evidence" value="ECO:0000315"/>
    <property type="project" value="FlyBase"/>
</dbReference>
<dbReference type="GO" id="GO:0001732">
    <property type="term" value="P:formation of cytoplasmic translation initiation complex"/>
    <property type="evidence" value="ECO:0007669"/>
    <property type="project" value="UniProtKB-UniRule"/>
</dbReference>
<dbReference type="GO" id="GO:0045747">
    <property type="term" value="P:positive regulation of Notch signaling pathway"/>
    <property type="evidence" value="ECO:0000315"/>
    <property type="project" value="FlyBase"/>
</dbReference>
<dbReference type="GO" id="GO:0061059">
    <property type="term" value="P:positive regulation of peptidoglycan recognition protein signaling pathway"/>
    <property type="evidence" value="ECO:0000315"/>
    <property type="project" value="FlyBase"/>
</dbReference>
<dbReference type="GO" id="GO:0006413">
    <property type="term" value="P:translational initiation"/>
    <property type="evidence" value="ECO:0000250"/>
    <property type="project" value="FlyBase"/>
</dbReference>
<dbReference type="CDD" id="cd08064">
    <property type="entry name" value="MPN_eIF3f"/>
    <property type="match status" value="1"/>
</dbReference>
<dbReference type="FunFam" id="3.40.140.10:FF:000014">
    <property type="entry name" value="Eukaryotic translation initiation factor 3 subunit F"/>
    <property type="match status" value="1"/>
</dbReference>
<dbReference type="Gene3D" id="3.40.140.10">
    <property type="entry name" value="Cytidine Deaminase, domain 2"/>
    <property type="match status" value="1"/>
</dbReference>
<dbReference type="HAMAP" id="MF_03005">
    <property type="entry name" value="eIF3f"/>
    <property type="match status" value="1"/>
</dbReference>
<dbReference type="InterPro" id="IPR027531">
    <property type="entry name" value="eIF3f"/>
</dbReference>
<dbReference type="InterPro" id="IPR024969">
    <property type="entry name" value="EIF3F/CSN6-like_C"/>
</dbReference>
<dbReference type="InterPro" id="IPR000555">
    <property type="entry name" value="JAMM/MPN+_dom"/>
</dbReference>
<dbReference type="InterPro" id="IPR037518">
    <property type="entry name" value="MPN"/>
</dbReference>
<dbReference type="PANTHER" id="PTHR10540:SF6">
    <property type="entry name" value="EUKARYOTIC TRANSLATION INITIATION FACTOR 3 SUBUNIT F"/>
    <property type="match status" value="1"/>
</dbReference>
<dbReference type="PANTHER" id="PTHR10540">
    <property type="entry name" value="EUKARYOTIC TRANSLATION INITIATION FACTOR 3 SUBUNIT F-RELATED"/>
    <property type="match status" value="1"/>
</dbReference>
<dbReference type="Pfam" id="PF01398">
    <property type="entry name" value="JAB"/>
    <property type="match status" value="1"/>
</dbReference>
<dbReference type="Pfam" id="PF13012">
    <property type="entry name" value="MitMem_reg"/>
    <property type="match status" value="1"/>
</dbReference>
<dbReference type="SMART" id="SM00232">
    <property type="entry name" value="JAB_MPN"/>
    <property type="match status" value="1"/>
</dbReference>
<dbReference type="PROSITE" id="PS50249">
    <property type="entry name" value="MPN"/>
    <property type="match status" value="1"/>
</dbReference>
<accession>Q9VN50</accession>
<evidence type="ECO:0000255" key="1">
    <source>
        <dbReference type="HAMAP-Rule" id="MF_03005"/>
    </source>
</evidence>
<evidence type="ECO:0000255" key="2">
    <source>
        <dbReference type="PROSITE-ProRule" id="PRU01182"/>
    </source>
</evidence>
<evidence type="ECO:0000312" key="3">
    <source>
        <dbReference type="FlyBase" id="FBgn0037270"/>
    </source>
</evidence>
<feature type="chain" id="PRO_0000364303" description="Eukaryotic translation initiation factor 3 subunit F-1">
    <location>
        <begin position="1"/>
        <end position="280"/>
    </location>
</feature>
<feature type="domain" description="MPN" evidence="2">
    <location>
        <begin position="8"/>
        <end position="138"/>
    </location>
</feature>
<name>EI3F1_DROME</name>
<protein>
    <recommendedName>
        <fullName evidence="1">Eukaryotic translation initiation factor 3 subunit F-1</fullName>
        <shortName evidence="1">eIF3f-1</shortName>
    </recommendedName>
    <alternativeName>
        <fullName evidence="1">Eukaryotic translation initiation factor 3 subunit 5-1</fullName>
    </alternativeName>
</protein>
<sequence>MSALNLTVRVHPVVLFQVVDAFERRNADSHRVIGTLLGSVDKGVVEVTNCFCVPHKEHDDQVEAELSYALDMYDLNRKVNSNESVVGWWATGNDVTNHSSVIHEYYARECNNPVHLTVDTSLQGGRMGLRAYVCIQLGVPGGKSGCMFTPIPVELTSYEPETFGLKLLQKTVGVSPAHRPKTVPPMLDLAQISEASTKLQSLLDLILKYVDDVIAHKVTPDNAVGRQLLDLIHSVPHMTHEQFTQMFNANVRNLLLVITLSQLIKTQLQLNEKLTFLPTA</sequence>
<gene>
    <name evidence="1" type="primary">eIF3f1</name>
    <name evidence="1" type="synonym">eIF3-S5-1</name>
    <name evidence="3" type="ORF">CG9769</name>
</gene>
<comment type="function">
    <text evidence="1">Component of the eukaryotic translation initiation factor 3 (eIF-3) complex, which is involved in protein synthesis of a specialized repertoire of mRNAs and, together with other initiation factors, stimulates binding of mRNA and methionyl-tRNAi to the 40S ribosome. The eIF-3 complex specifically targets and initiates translation of a subset of mRNAs involved in cell proliferation.</text>
</comment>
<comment type="subunit">
    <text evidence="1">Component of the eukaryotic translation initiation factor 3 (eIF-3) complex. The eIF-3 complex interacts with pix.</text>
</comment>
<comment type="interaction">
    <interactant intactId="EBI-87054">
        <id>Q9VN50</id>
    </interactant>
    <interactant intactId="EBI-162173">
        <id>Q7JVI3</id>
        <label>eIF3m</label>
    </interactant>
    <organismsDiffer>false</organismsDiffer>
    <experiments>3</experiments>
</comment>
<comment type="subcellular location">
    <subcellularLocation>
        <location evidence="1">Cytoplasm</location>
    </subcellularLocation>
</comment>
<comment type="similarity">
    <text evidence="1">Belongs to the eIF-3 subunit F family.</text>
</comment>
<organism>
    <name type="scientific">Drosophila melanogaster</name>
    <name type="common">Fruit fly</name>
    <dbReference type="NCBI Taxonomy" id="7227"/>
    <lineage>
        <taxon>Eukaryota</taxon>
        <taxon>Metazoa</taxon>
        <taxon>Ecdysozoa</taxon>
        <taxon>Arthropoda</taxon>
        <taxon>Hexapoda</taxon>
        <taxon>Insecta</taxon>
        <taxon>Pterygota</taxon>
        <taxon>Neoptera</taxon>
        <taxon>Endopterygota</taxon>
        <taxon>Diptera</taxon>
        <taxon>Brachycera</taxon>
        <taxon>Muscomorpha</taxon>
        <taxon>Ephydroidea</taxon>
        <taxon>Drosophilidae</taxon>
        <taxon>Drosophila</taxon>
        <taxon>Sophophora</taxon>
    </lineage>
</organism>
<proteinExistence type="evidence at protein level"/>